<reference key="1">
    <citation type="submission" date="2005-09" db="EMBL/GenBank/DDBJ databases">
        <title>Complete genome sequence of Clostridium kluyveri and comparative genomics of Clostridia species.</title>
        <authorList>
            <person name="Inui M."/>
            <person name="Nonaka H."/>
            <person name="Shinoda Y."/>
            <person name="Ikenaga Y."/>
            <person name="Abe M."/>
            <person name="Naito K."/>
            <person name="Vertes A.A."/>
            <person name="Yukawa H."/>
        </authorList>
    </citation>
    <scope>NUCLEOTIDE SEQUENCE [LARGE SCALE GENOMIC DNA]</scope>
    <source>
        <strain>NBRC 12016</strain>
    </source>
</reference>
<name>ATPD_CLOK1</name>
<dbReference type="EMBL" id="AP009049">
    <property type="protein sequence ID" value="BAH08307.1"/>
    <property type="molecule type" value="Genomic_DNA"/>
</dbReference>
<dbReference type="RefSeq" id="WP_012104009.1">
    <property type="nucleotide sequence ID" value="NC_011837.1"/>
</dbReference>
<dbReference type="SMR" id="B9DX64"/>
<dbReference type="KEGG" id="ckr:CKR_3256"/>
<dbReference type="HOGENOM" id="CLU_085114_4_0_9"/>
<dbReference type="Proteomes" id="UP000007969">
    <property type="component" value="Chromosome"/>
</dbReference>
<dbReference type="GO" id="GO:0005886">
    <property type="term" value="C:plasma membrane"/>
    <property type="evidence" value="ECO:0007669"/>
    <property type="project" value="UniProtKB-SubCell"/>
</dbReference>
<dbReference type="GO" id="GO:0045259">
    <property type="term" value="C:proton-transporting ATP synthase complex"/>
    <property type="evidence" value="ECO:0007669"/>
    <property type="project" value="UniProtKB-KW"/>
</dbReference>
<dbReference type="GO" id="GO:0046933">
    <property type="term" value="F:proton-transporting ATP synthase activity, rotational mechanism"/>
    <property type="evidence" value="ECO:0007669"/>
    <property type="project" value="UniProtKB-UniRule"/>
</dbReference>
<dbReference type="Gene3D" id="1.10.520.20">
    <property type="entry name" value="N-terminal domain of the delta subunit of the F1F0-ATP synthase"/>
    <property type="match status" value="1"/>
</dbReference>
<dbReference type="HAMAP" id="MF_01416">
    <property type="entry name" value="ATP_synth_delta_bact"/>
    <property type="match status" value="1"/>
</dbReference>
<dbReference type="InterPro" id="IPR026015">
    <property type="entry name" value="ATP_synth_OSCP/delta_N_sf"/>
</dbReference>
<dbReference type="InterPro" id="IPR020781">
    <property type="entry name" value="ATPase_OSCP/d_CS"/>
</dbReference>
<dbReference type="InterPro" id="IPR000711">
    <property type="entry name" value="ATPase_OSCP/dsu"/>
</dbReference>
<dbReference type="NCBIfam" id="TIGR01145">
    <property type="entry name" value="ATP_synt_delta"/>
    <property type="match status" value="1"/>
</dbReference>
<dbReference type="NCBIfam" id="NF004403">
    <property type="entry name" value="PRK05758.2-4"/>
    <property type="match status" value="1"/>
</dbReference>
<dbReference type="PANTHER" id="PTHR11910">
    <property type="entry name" value="ATP SYNTHASE DELTA CHAIN"/>
    <property type="match status" value="1"/>
</dbReference>
<dbReference type="Pfam" id="PF00213">
    <property type="entry name" value="OSCP"/>
    <property type="match status" value="1"/>
</dbReference>
<dbReference type="PRINTS" id="PR00125">
    <property type="entry name" value="ATPASEDELTA"/>
</dbReference>
<dbReference type="SUPFAM" id="SSF47928">
    <property type="entry name" value="N-terminal domain of the delta subunit of the F1F0-ATP synthase"/>
    <property type="match status" value="1"/>
</dbReference>
<dbReference type="PROSITE" id="PS00389">
    <property type="entry name" value="ATPASE_DELTA"/>
    <property type="match status" value="1"/>
</dbReference>
<organism>
    <name type="scientific">Clostridium kluyveri (strain NBRC 12016)</name>
    <dbReference type="NCBI Taxonomy" id="583346"/>
    <lineage>
        <taxon>Bacteria</taxon>
        <taxon>Bacillati</taxon>
        <taxon>Bacillota</taxon>
        <taxon>Clostridia</taxon>
        <taxon>Eubacteriales</taxon>
        <taxon>Clostridiaceae</taxon>
        <taxon>Clostridium</taxon>
    </lineage>
</organism>
<sequence length="181" mass="21208">MYEYLDRRYALALYKIAEEKGKVEEYLEELKDVTDIINNDTQFLEFIEHPEISTAEKKKTFINVFKGKISEDILSFLLILIDKGRINQLYSKLKEMGKIYLENHNTVIATVKTVIPLEDDERETLTEKLRRKFNKEVLIKEELDPEIIGGVYVEVNNMVIDGTVKSKLSEMKKIMLKGEQR</sequence>
<comment type="function">
    <text evidence="1">F(1)F(0) ATP synthase produces ATP from ADP in the presence of a proton or sodium gradient. F-type ATPases consist of two structural domains, F(1) containing the extramembraneous catalytic core and F(0) containing the membrane proton channel, linked together by a central stalk and a peripheral stalk. During catalysis, ATP synthesis in the catalytic domain of F(1) is coupled via a rotary mechanism of the central stalk subunits to proton translocation.</text>
</comment>
<comment type="function">
    <text evidence="1">This protein is part of the stalk that links CF(0) to CF(1). It either transmits conformational changes from CF(0) to CF(1) or is implicated in proton conduction.</text>
</comment>
<comment type="subunit">
    <text evidence="1">F-type ATPases have 2 components, F(1) - the catalytic core - and F(0) - the membrane proton channel. F(1) has five subunits: alpha(3), beta(3), gamma(1), delta(1), epsilon(1). F(0) has three main subunits: a(1), b(2) and c(10-14). The alpha and beta chains form an alternating ring which encloses part of the gamma chain. F(1) is attached to F(0) by a central stalk formed by the gamma and epsilon chains, while a peripheral stalk is formed by the delta and b chains.</text>
</comment>
<comment type="subcellular location">
    <subcellularLocation>
        <location evidence="1">Cell membrane</location>
        <topology evidence="1">Peripheral membrane protein</topology>
    </subcellularLocation>
</comment>
<comment type="similarity">
    <text evidence="1">Belongs to the ATPase delta chain family.</text>
</comment>
<proteinExistence type="inferred from homology"/>
<keyword id="KW-0066">ATP synthesis</keyword>
<keyword id="KW-1003">Cell membrane</keyword>
<keyword id="KW-0139">CF(1)</keyword>
<keyword id="KW-0375">Hydrogen ion transport</keyword>
<keyword id="KW-0406">Ion transport</keyword>
<keyword id="KW-0472">Membrane</keyword>
<keyword id="KW-0813">Transport</keyword>
<accession>B9DX64</accession>
<protein>
    <recommendedName>
        <fullName evidence="1">ATP synthase subunit delta</fullName>
    </recommendedName>
    <alternativeName>
        <fullName evidence="1">ATP synthase F(1) sector subunit delta</fullName>
    </alternativeName>
    <alternativeName>
        <fullName evidence="1">F-type ATPase subunit delta</fullName>
        <shortName evidence="1">F-ATPase subunit delta</shortName>
    </alternativeName>
</protein>
<gene>
    <name evidence="1" type="primary">atpH</name>
    <name type="ordered locus">CKR_3256</name>
</gene>
<evidence type="ECO:0000255" key="1">
    <source>
        <dbReference type="HAMAP-Rule" id="MF_01416"/>
    </source>
</evidence>
<feature type="chain" id="PRO_1000184677" description="ATP synthase subunit delta">
    <location>
        <begin position="1"/>
        <end position="181"/>
    </location>
</feature>